<gene>
    <name evidence="1" type="primary">rplR</name>
    <name type="ordered locus">BQ08070</name>
</gene>
<sequence length="120" mass="13307">MVSSKDIIQRRALRVRRRIKMVSHDRPRLSVYRSNQNIYAQIIDDSRGCTLVSASTLEGDLKKSLKSGSDKQAAFAVGKLIAERAKKAGVNEVVFDRGAYVYHGRVKALAEAAREGGLNF</sequence>
<dbReference type="EMBL" id="BX897700">
    <property type="protein sequence ID" value="CAF26290.1"/>
    <property type="molecule type" value="Genomic_DNA"/>
</dbReference>
<dbReference type="RefSeq" id="WP_011179537.1">
    <property type="nucleotide sequence ID" value="NC_005955.1"/>
</dbReference>
<dbReference type="SMR" id="Q6FZD8"/>
<dbReference type="GeneID" id="56532837"/>
<dbReference type="KEGG" id="bqu:BQ08070"/>
<dbReference type="eggNOG" id="COG0256">
    <property type="taxonomic scope" value="Bacteria"/>
</dbReference>
<dbReference type="HOGENOM" id="CLU_098841_0_1_5"/>
<dbReference type="OrthoDB" id="9810939at2"/>
<dbReference type="Proteomes" id="UP000000597">
    <property type="component" value="Chromosome"/>
</dbReference>
<dbReference type="GO" id="GO:0022625">
    <property type="term" value="C:cytosolic large ribosomal subunit"/>
    <property type="evidence" value="ECO:0007669"/>
    <property type="project" value="TreeGrafter"/>
</dbReference>
<dbReference type="GO" id="GO:0008097">
    <property type="term" value="F:5S rRNA binding"/>
    <property type="evidence" value="ECO:0007669"/>
    <property type="project" value="TreeGrafter"/>
</dbReference>
<dbReference type="GO" id="GO:0003735">
    <property type="term" value="F:structural constituent of ribosome"/>
    <property type="evidence" value="ECO:0007669"/>
    <property type="project" value="InterPro"/>
</dbReference>
<dbReference type="GO" id="GO:0006412">
    <property type="term" value="P:translation"/>
    <property type="evidence" value="ECO:0007669"/>
    <property type="project" value="UniProtKB-UniRule"/>
</dbReference>
<dbReference type="CDD" id="cd00432">
    <property type="entry name" value="Ribosomal_L18_L5e"/>
    <property type="match status" value="1"/>
</dbReference>
<dbReference type="FunFam" id="3.30.420.100:FF:000001">
    <property type="entry name" value="50S ribosomal protein L18"/>
    <property type="match status" value="1"/>
</dbReference>
<dbReference type="Gene3D" id="3.30.420.100">
    <property type="match status" value="1"/>
</dbReference>
<dbReference type="HAMAP" id="MF_01337_B">
    <property type="entry name" value="Ribosomal_uL18_B"/>
    <property type="match status" value="1"/>
</dbReference>
<dbReference type="InterPro" id="IPR004389">
    <property type="entry name" value="Ribosomal_uL18_bac-type"/>
</dbReference>
<dbReference type="InterPro" id="IPR005484">
    <property type="entry name" value="Ribosomal_uL18_bac/euk"/>
</dbReference>
<dbReference type="NCBIfam" id="TIGR00060">
    <property type="entry name" value="L18_bact"/>
    <property type="match status" value="1"/>
</dbReference>
<dbReference type="PANTHER" id="PTHR12899">
    <property type="entry name" value="39S RIBOSOMAL PROTEIN L18, MITOCHONDRIAL"/>
    <property type="match status" value="1"/>
</dbReference>
<dbReference type="PANTHER" id="PTHR12899:SF3">
    <property type="entry name" value="LARGE RIBOSOMAL SUBUNIT PROTEIN UL18M"/>
    <property type="match status" value="1"/>
</dbReference>
<dbReference type="Pfam" id="PF00861">
    <property type="entry name" value="Ribosomal_L18p"/>
    <property type="match status" value="1"/>
</dbReference>
<dbReference type="SUPFAM" id="SSF53137">
    <property type="entry name" value="Translational machinery components"/>
    <property type="match status" value="1"/>
</dbReference>
<protein>
    <recommendedName>
        <fullName evidence="1">Large ribosomal subunit protein uL18</fullName>
    </recommendedName>
    <alternativeName>
        <fullName evidence="2">50S ribosomal protein L18</fullName>
    </alternativeName>
</protein>
<reference key="1">
    <citation type="journal article" date="2004" name="Proc. Natl. Acad. Sci. U.S.A.">
        <title>The louse-borne human pathogen Bartonella quintana is a genomic derivative of the zoonotic agent Bartonella henselae.</title>
        <authorList>
            <person name="Alsmark U.C.M."/>
            <person name="Frank A.C."/>
            <person name="Karlberg E.O."/>
            <person name="Legault B.-A."/>
            <person name="Ardell D.H."/>
            <person name="Canbaeck B."/>
            <person name="Eriksson A.-S."/>
            <person name="Naeslund A.K."/>
            <person name="Handley S.A."/>
            <person name="Huvet M."/>
            <person name="La Scola B."/>
            <person name="Holmberg M."/>
            <person name="Andersson S.G.E."/>
        </authorList>
    </citation>
    <scope>NUCLEOTIDE SEQUENCE [LARGE SCALE GENOMIC DNA]</scope>
    <source>
        <strain>Toulouse</strain>
    </source>
</reference>
<proteinExistence type="inferred from homology"/>
<comment type="function">
    <text evidence="1">This is one of the proteins that bind and probably mediate the attachment of the 5S RNA into the large ribosomal subunit, where it forms part of the central protuberance.</text>
</comment>
<comment type="subunit">
    <text evidence="1">Part of the 50S ribosomal subunit; part of the 5S rRNA/L5/L18/L25 subcomplex. Contacts the 5S and 23S rRNAs.</text>
</comment>
<comment type="similarity">
    <text evidence="1">Belongs to the universal ribosomal protein uL18 family.</text>
</comment>
<feature type="chain" id="PRO_0000131219" description="Large ribosomal subunit protein uL18">
    <location>
        <begin position="1"/>
        <end position="120"/>
    </location>
</feature>
<evidence type="ECO:0000255" key="1">
    <source>
        <dbReference type="HAMAP-Rule" id="MF_01337"/>
    </source>
</evidence>
<evidence type="ECO:0000305" key="2"/>
<keyword id="KW-0687">Ribonucleoprotein</keyword>
<keyword id="KW-0689">Ribosomal protein</keyword>
<keyword id="KW-0694">RNA-binding</keyword>
<keyword id="KW-0699">rRNA-binding</keyword>
<organism>
    <name type="scientific">Bartonella quintana (strain Toulouse)</name>
    <name type="common">Rochalimaea quintana</name>
    <dbReference type="NCBI Taxonomy" id="283165"/>
    <lineage>
        <taxon>Bacteria</taxon>
        <taxon>Pseudomonadati</taxon>
        <taxon>Pseudomonadota</taxon>
        <taxon>Alphaproteobacteria</taxon>
        <taxon>Hyphomicrobiales</taxon>
        <taxon>Bartonellaceae</taxon>
        <taxon>Bartonella</taxon>
    </lineage>
</organism>
<accession>Q6FZD8</accession>
<name>RL18_BARQU</name>